<dbReference type="EMBL" id="Y11301">
    <property type="protein sequence ID" value="CAA72159.1"/>
    <property type="molecule type" value="Genomic_DNA"/>
</dbReference>
<dbReference type="SMR" id="O93591"/>
<dbReference type="GO" id="GO:0005737">
    <property type="term" value="C:cytoplasm"/>
    <property type="evidence" value="ECO:0007669"/>
    <property type="project" value="UniProtKB-SubCell"/>
</dbReference>
<dbReference type="GO" id="GO:0005634">
    <property type="term" value="C:nucleus"/>
    <property type="evidence" value="ECO:0007669"/>
    <property type="project" value="UniProtKB-SubCell"/>
</dbReference>
<dbReference type="GO" id="GO:0046872">
    <property type="term" value="F:metal ion binding"/>
    <property type="evidence" value="ECO:0007669"/>
    <property type="project" value="UniProtKB-KW"/>
</dbReference>
<dbReference type="GO" id="GO:0005212">
    <property type="term" value="F:structural constituent of eye lens"/>
    <property type="evidence" value="ECO:0007669"/>
    <property type="project" value="UniProtKB-KW"/>
</dbReference>
<dbReference type="GO" id="GO:0051082">
    <property type="term" value="F:unfolded protein binding"/>
    <property type="evidence" value="ECO:0007669"/>
    <property type="project" value="TreeGrafter"/>
</dbReference>
<dbReference type="GO" id="GO:0002088">
    <property type="term" value="P:lens development in camera-type eye"/>
    <property type="evidence" value="ECO:0007669"/>
    <property type="project" value="TreeGrafter"/>
</dbReference>
<dbReference type="GO" id="GO:0043066">
    <property type="term" value="P:negative regulation of apoptotic process"/>
    <property type="evidence" value="ECO:0007669"/>
    <property type="project" value="TreeGrafter"/>
</dbReference>
<dbReference type="GO" id="GO:0042026">
    <property type="term" value="P:protein refolding"/>
    <property type="evidence" value="ECO:0007669"/>
    <property type="project" value="TreeGrafter"/>
</dbReference>
<dbReference type="GO" id="GO:0009408">
    <property type="term" value="P:response to heat"/>
    <property type="evidence" value="ECO:0007669"/>
    <property type="project" value="TreeGrafter"/>
</dbReference>
<dbReference type="CDD" id="cd06497">
    <property type="entry name" value="ACD_alphaA-crystallin_HspB4"/>
    <property type="match status" value="1"/>
</dbReference>
<dbReference type="Gene3D" id="2.60.40.790">
    <property type="match status" value="1"/>
</dbReference>
<dbReference type="InterPro" id="IPR002068">
    <property type="entry name" value="A-crystallin/Hsp20_dom"/>
</dbReference>
<dbReference type="InterPro" id="IPR055269">
    <property type="entry name" value="Alpha-crystallin/HSP_16"/>
</dbReference>
<dbReference type="InterPro" id="IPR001436">
    <property type="entry name" value="Alpha-crystallin/sHSP_animal"/>
</dbReference>
<dbReference type="InterPro" id="IPR003090">
    <property type="entry name" value="Alpha-crystallin_N"/>
</dbReference>
<dbReference type="InterPro" id="IPR008978">
    <property type="entry name" value="HSP20-like_chaperone"/>
</dbReference>
<dbReference type="PANTHER" id="PTHR45640:SF14">
    <property type="entry name" value="ALPHA-CRYSTALLIN A CHAIN"/>
    <property type="match status" value="1"/>
</dbReference>
<dbReference type="PANTHER" id="PTHR45640">
    <property type="entry name" value="HEAT SHOCK PROTEIN HSP-12.2-RELATED"/>
    <property type="match status" value="1"/>
</dbReference>
<dbReference type="Pfam" id="PF00525">
    <property type="entry name" value="Crystallin"/>
    <property type="match status" value="1"/>
</dbReference>
<dbReference type="Pfam" id="PF00011">
    <property type="entry name" value="HSP20"/>
    <property type="match status" value="1"/>
</dbReference>
<dbReference type="PIRSF" id="PIRSF036514">
    <property type="entry name" value="Sm_HSP_B1"/>
    <property type="match status" value="1"/>
</dbReference>
<dbReference type="PRINTS" id="PR00299">
    <property type="entry name" value="ACRYSTALLIN"/>
</dbReference>
<dbReference type="SUPFAM" id="SSF49764">
    <property type="entry name" value="HSP20-like chaperones"/>
    <property type="match status" value="1"/>
</dbReference>
<dbReference type="PROSITE" id="PS01031">
    <property type="entry name" value="SHSP"/>
    <property type="match status" value="1"/>
</dbReference>
<accession>O93591</accession>
<keyword id="KW-0007">Acetylation</keyword>
<keyword id="KW-0963">Cytoplasm</keyword>
<keyword id="KW-1015">Disulfide bond</keyword>
<keyword id="KW-0273">Eye lens protein</keyword>
<keyword id="KW-0479">Metal-binding</keyword>
<keyword id="KW-0539">Nucleus</keyword>
<keyword id="KW-0862">Zinc</keyword>
<sequence length="173" mass="19804">MDIAIQHPWFRRALGYPSRLFDQFFGEGLFDYDLFPYATSTVSPYYRYSLFRNFLDSSNSGMSEVRSDRDKFMVYLDVKHFSPEELNVKVAEDYVEIQGKHGERQDDHGYISREFHRRYRLPSNVDQSAITCTLSADGQLTICGPKSGGSESGRGDRSIPVTRDDKTNSTPSS</sequence>
<organism>
    <name type="scientific">Psalidodon fasciatus</name>
    <name type="common">Banded astyanax</name>
    <name type="synonym">Astyanax fasciatus</name>
    <dbReference type="NCBI Taxonomy" id="223369"/>
    <lineage>
        <taxon>Eukaryota</taxon>
        <taxon>Metazoa</taxon>
        <taxon>Chordata</taxon>
        <taxon>Craniata</taxon>
        <taxon>Vertebrata</taxon>
        <taxon>Euteleostomi</taxon>
        <taxon>Actinopterygii</taxon>
        <taxon>Neopterygii</taxon>
        <taxon>Teleostei</taxon>
        <taxon>Ostariophysi</taxon>
        <taxon>Characiformes</taxon>
        <taxon>Characoidei</taxon>
        <taxon>Acestrorhamphidae</taxon>
        <taxon>Acestrorhamphidae polyphyletic genera</taxon>
        <taxon>Psalidodon</taxon>
    </lineage>
</organism>
<feature type="chain" id="PRO_0000125903" description="Alpha-crystallin A chain">
    <location>
        <begin position="1"/>
        <end position="173"/>
    </location>
</feature>
<feature type="domain" description="sHSP" evidence="4">
    <location>
        <begin position="53"/>
        <end position="164"/>
    </location>
</feature>
<feature type="region of interest" description="Disordered" evidence="5">
    <location>
        <begin position="143"/>
        <end position="173"/>
    </location>
</feature>
<feature type="compositionally biased region" description="Basic and acidic residues" evidence="5">
    <location>
        <begin position="153"/>
        <end position="167"/>
    </location>
</feature>
<feature type="binding site" evidence="2">
    <location>
        <position position="101"/>
    </location>
    <ligand>
        <name>Zn(2+)</name>
        <dbReference type="ChEBI" id="CHEBI:29105"/>
        <label>1</label>
    </ligand>
</feature>
<feature type="binding site" evidence="2">
    <location>
        <position position="103"/>
    </location>
    <ligand>
        <name>Zn(2+)</name>
        <dbReference type="ChEBI" id="CHEBI:29105"/>
        <label>1</label>
    </ligand>
</feature>
<feature type="binding site" evidence="2">
    <location>
        <position position="108"/>
    </location>
    <ligand>
        <name>Zn(2+)</name>
        <dbReference type="ChEBI" id="CHEBI:29105"/>
        <label>2</label>
    </ligand>
</feature>
<feature type="modified residue" description="N-acetylmethionine" evidence="1">
    <location>
        <position position="1"/>
    </location>
</feature>
<feature type="disulfide bond" evidence="3">
    <location>
        <begin position="132"/>
        <end position="143"/>
    </location>
</feature>
<evidence type="ECO:0000250" key="1"/>
<evidence type="ECO:0000250" key="2">
    <source>
        <dbReference type="UniProtKB" id="P02470"/>
    </source>
</evidence>
<evidence type="ECO:0000250" key="3">
    <source>
        <dbReference type="UniProtKB" id="P02489"/>
    </source>
</evidence>
<evidence type="ECO:0000255" key="4">
    <source>
        <dbReference type="PROSITE-ProRule" id="PRU00285"/>
    </source>
</evidence>
<evidence type="ECO:0000256" key="5">
    <source>
        <dbReference type="SAM" id="MobiDB-lite"/>
    </source>
</evidence>
<protein>
    <recommendedName>
        <fullName>Alpha-crystallin A chain</fullName>
    </recommendedName>
</protein>
<proteinExistence type="inferred from homology"/>
<reference key="1">
    <citation type="journal article" date="1998" name="Gene">
        <title>Cloning of the alphaA-crystallin genes of a blind cave form and the epigean form of Astyanax fasciatus: a comparative analysis of structure, expression and evolutionary conservation.</title>
        <authorList>
            <person name="Behrens M."/>
            <person name="Wilkens H."/>
            <person name="Schmale H."/>
        </authorList>
    </citation>
    <scope>NUCLEOTIDE SEQUENCE [GENOMIC DNA]</scope>
    <source>
        <tissue>Spleen</tissue>
    </source>
</reference>
<gene>
    <name type="primary">cryaa</name>
</gene>
<name>CRYAA_PSAFA</name>
<comment type="function">
    <text evidence="3">Contributes to the transparency and refractive index of the lens. May act as a chaperone, preventing aggregation of various proteins under a wide range of stress conditions.</text>
</comment>
<comment type="subunit">
    <text evidence="2 3">Heteropolymer composed of three CRYAA and one CRYAB subunits (By similarity). Inter-subunit bridging via zinc ions enhances stability, which is crucial as there is no protein turn over in the lens. Zinc coordination is achieved at least by His-101, Glu-103 and His-108. His-101 and Glu-103 come from the same molecule within the oligomer, while His-108 residue is provided by another molecule (By similarity). Can also form homodimers and homotetramers (dimers of dimers) which serve as the building blocks of homooligomers. Part of a complex required for lens intermediate filament formation composed of BFSP1, BFSP2 and CRYAA (By similarity).</text>
</comment>
<comment type="subcellular location">
    <subcellularLocation>
        <location evidence="3">Cytoplasm</location>
    </subcellularLocation>
    <subcellularLocation>
        <location evidence="3">Nucleus</location>
    </subcellularLocation>
    <text evidence="3">Translocates to the nucleus during heat shock.</text>
</comment>
<comment type="similarity">
    <text evidence="4">Belongs to the small heat shock protein (HSP20) family.</text>
</comment>